<evidence type="ECO:0000255" key="1">
    <source>
        <dbReference type="HAMAP-Rule" id="MF_00270"/>
    </source>
</evidence>
<evidence type="ECO:0000305" key="2"/>
<keyword id="KW-1185">Reference proteome</keyword>
<keyword id="KW-0687">Ribonucleoprotein</keyword>
<keyword id="KW-0689">Ribosomal protein</keyword>
<keyword id="KW-0694">RNA-binding</keyword>
<keyword id="KW-0699">rRNA-binding</keyword>
<proteinExistence type="inferred from homology"/>
<comment type="function">
    <text evidence="1">Binds as a heterodimer with protein bS6 to the central domain of the 16S rRNA, where it helps stabilize the platform of the 30S subunit.</text>
</comment>
<comment type="subunit">
    <text evidence="1">Part of the 30S ribosomal subunit. Forms a tight heterodimer with protein bS6.</text>
</comment>
<comment type="similarity">
    <text evidence="1">Belongs to the bacterial ribosomal protein bS18 family.</text>
</comment>
<protein>
    <recommendedName>
        <fullName evidence="1">Small ribosomal subunit protein bS18</fullName>
    </recommendedName>
    <alternativeName>
        <fullName evidence="2">30S ribosomal protein S18</fullName>
    </alternativeName>
</protein>
<gene>
    <name evidence="1" type="primary">rpsR</name>
    <name type="synonym">rs18</name>
    <name type="ordered locus">SP_1539</name>
</gene>
<reference key="1">
    <citation type="journal article" date="2001" name="Science">
        <title>Complete genome sequence of a virulent isolate of Streptococcus pneumoniae.</title>
        <authorList>
            <person name="Tettelin H."/>
            <person name="Nelson K.E."/>
            <person name="Paulsen I.T."/>
            <person name="Eisen J.A."/>
            <person name="Read T.D."/>
            <person name="Peterson S.N."/>
            <person name="Heidelberg J.F."/>
            <person name="DeBoy R.T."/>
            <person name="Haft D.H."/>
            <person name="Dodson R.J."/>
            <person name="Durkin A.S."/>
            <person name="Gwinn M.L."/>
            <person name="Kolonay J.F."/>
            <person name="Nelson W.C."/>
            <person name="Peterson J.D."/>
            <person name="Umayam L.A."/>
            <person name="White O."/>
            <person name="Salzberg S.L."/>
            <person name="Lewis M.R."/>
            <person name="Radune D."/>
            <person name="Holtzapple E.K."/>
            <person name="Khouri H.M."/>
            <person name="Wolf A.M."/>
            <person name="Utterback T.R."/>
            <person name="Hansen C.L."/>
            <person name="McDonald L.A."/>
            <person name="Feldblyum T.V."/>
            <person name="Angiuoli S.V."/>
            <person name="Dickinson T."/>
            <person name="Hickey E.K."/>
            <person name="Holt I.E."/>
            <person name="Loftus B.J."/>
            <person name="Yang F."/>
            <person name="Smith H.O."/>
            <person name="Venter J.C."/>
            <person name="Dougherty B.A."/>
            <person name="Morrison D.A."/>
            <person name="Hollingshead S.K."/>
            <person name="Fraser C.M."/>
        </authorList>
    </citation>
    <scope>NUCLEOTIDE SEQUENCE [LARGE SCALE GENOMIC DNA]</scope>
    <source>
        <strain>ATCC BAA-334 / TIGR4</strain>
    </source>
</reference>
<name>RS18_STRPN</name>
<accession>P66472</accession>
<accession>Q97PR3</accession>
<feature type="chain" id="PRO_0000111238" description="Small ribosomal subunit protein bS18">
    <location>
        <begin position="1"/>
        <end position="79"/>
    </location>
</feature>
<sequence>MAQQRRGGFKRRKKVDYIAANKIEYVDYKDTELLSRFVSERGKILPRRVTGTSAKNQRKVTTAIKRARVMALMPFVNED</sequence>
<dbReference type="EMBL" id="AE005672">
    <property type="protein sequence ID" value="AAK75627.1"/>
    <property type="molecule type" value="Genomic_DNA"/>
</dbReference>
<dbReference type="PIR" id="B95179">
    <property type="entry name" value="B95179"/>
</dbReference>
<dbReference type="RefSeq" id="WP_000068664.1">
    <property type="nucleotide sequence ID" value="NZ_CP155539.1"/>
</dbReference>
<dbReference type="SMR" id="P66472"/>
<dbReference type="PaxDb" id="170187-SP_1539"/>
<dbReference type="EnsemblBacteria" id="AAK75627">
    <property type="protein sequence ID" value="AAK75627"/>
    <property type="gene ID" value="SP_1539"/>
</dbReference>
<dbReference type="GeneID" id="93963800"/>
<dbReference type="KEGG" id="spn:SP_1539"/>
<dbReference type="eggNOG" id="COG0238">
    <property type="taxonomic scope" value="Bacteria"/>
</dbReference>
<dbReference type="PhylomeDB" id="P66472"/>
<dbReference type="BioCyc" id="SPNE170187:G1FZB-1557-MONOMER"/>
<dbReference type="Proteomes" id="UP000000585">
    <property type="component" value="Chromosome"/>
</dbReference>
<dbReference type="GO" id="GO:0022627">
    <property type="term" value="C:cytosolic small ribosomal subunit"/>
    <property type="evidence" value="ECO:0007669"/>
    <property type="project" value="TreeGrafter"/>
</dbReference>
<dbReference type="GO" id="GO:0070181">
    <property type="term" value="F:small ribosomal subunit rRNA binding"/>
    <property type="evidence" value="ECO:0007669"/>
    <property type="project" value="TreeGrafter"/>
</dbReference>
<dbReference type="GO" id="GO:0003735">
    <property type="term" value="F:structural constituent of ribosome"/>
    <property type="evidence" value="ECO:0007669"/>
    <property type="project" value="InterPro"/>
</dbReference>
<dbReference type="GO" id="GO:0006412">
    <property type="term" value="P:translation"/>
    <property type="evidence" value="ECO:0007669"/>
    <property type="project" value="UniProtKB-UniRule"/>
</dbReference>
<dbReference type="FunFam" id="4.10.640.10:FF:000003">
    <property type="entry name" value="30S ribosomal protein S18"/>
    <property type="match status" value="1"/>
</dbReference>
<dbReference type="Gene3D" id="4.10.640.10">
    <property type="entry name" value="Ribosomal protein S18"/>
    <property type="match status" value="1"/>
</dbReference>
<dbReference type="HAMAP" id="MF_00270">
    <property type="entry name" value="Ribosomal_bS18"/>
    <property type="match status" value="1"/>
</dbReference>
<dbReference type="InterPro" id="IPR001648">
    <property type="entry name" value="Ribosomal_bS18"/>
</dbReference>
<dbReference type="InterPro" id="IPR018275">
    <property type="entry name" value="Ribosomal_bS18_CS"/>
</dbReference>
<dbReference type="InterPro" id="IPR036870">
    <property type="entry name" value="Ribosomal_bS18_sf"/>
</dbReference>
<dbReference type="NCBIfam" id="TIGR00165">
    <property type="entry name" value="S18"/>
    <property type="match status" value="1"/>
</dbReference>
<dbReference type="PANTHER" id="PTHR13479">
    <property type="entry name" value="30S RIBOSOMAL PROTEIN S18"/>
    <property type="match status" value="1"/>
</dbReference>
<dbReference type="PANTHER" id="PTHR13479:SF40">
    <property type="entry name" value="SMALL RIBOSOMAL SUBUNIT PROTEIN BS18M"/>
    <property type="match status" value="1"/>
</dbReference>
<dbReference type="Pfam" id="PF01084">
    <property type="entry name" value="Ribosomal_S18"/>
    <property type="match status" value="1"/>
</dbReference>
<dbReference type="PRINTS" id="PR00974">
    <property type="entry name" value="RIBOSOMALS18"/>
</dbReference>
<dbReference type="SUPFAM" id="SSF46911">
    <property type="entry name" value="Ribosomal protein S18"/>
    <property type="match status" value="1"/>
</dbReference>
<dbReference type="PROSITE" id="PS00057">
    <property type="entry name" value="RIBOSOMAL_S18"/>
    <property type="match status" value="1"/>
</dbReference>
<organism>
    <name type="scientific">Streptococcus pneumoniae serotype 4 (strain ATCC BAA-334 / TIGR4)</name>
    <dbReference type="NCBI Taxonomy" id="170187"/>
    <lineage>
        <taxon>Bacteria</taxon>
        <taxon>Bacillati</taxon>
        <taxon>Bacillota</taxon>
        <taxon>Bacilli</taxon>
        <taxon>Lactobacillales</taxon>
        <taxon>Streptococcaceae</taxon>
        <taxon>Streptococcus</taxon>
    </lineage>
</organism>